<dbReference type="EC" id="4.2.1.33" evidence="1"/>
<dbReference type="EMBL" id="CP000090">
    <property type="protein sequence ID" value="AAZ61676.1"/>
    <property type="molecule type" value="Genomic_DNA"/>
</dbReference>
<dbReference type="SMR" id="Q46YV7"/>
<dbReference type="STRING" id="264198.Reut_A2314"/>
<dbReference type="KEGG" id="reu:Reut_A2314"/>
<dbReference type="eggNOG" id="COG0065">
    <property type="taxonomic scope" value="Bacteria"/>
</dbReference>
<dbReference type="HOGENOM" id="CLU_006714_3_4_4"/>
<dbReference type="OrthoDB" id="9802769at2"/>
<dbReference type="UniPathway" id="UPA00048">
    <property type="reaction ID" value="UER00071"/>
</dbReference>
<dbReference type="GO" id="GO:0003861">
    <property type="term" value="F:3-isopropylmalate dehydratase activity"/>
    <property type="evidence" value="ECO:0007669"/>
    <property type="project" value="UniProtKB-UniRule"/>
</dbReference>
<dbReference type="GO" id="GO:0051539">
    <property type="term" value="F:4 iron, 4 sulfur cluster binding"/>
    <property type="evidence" value="ECO:0007669"/>
    <property type="project" value="UniProtKB-KW"/>
</dbReference>
<dbReference type="GO" id="GO:0046872">
    <property type="term" value="F:metal ion binding"/>
    <property type="evidence" value="ECO:0007669"/>
    <property type="project" value="UniProtKB-KW"/>
</dbReference>
<dbReference type="GO" id="GO:0009098">
    <property type="term" value="P:L-leucine biosynthetic process"/>
    <property type="evidence" value="ECO:0007669"/>
    <property type="project" value="UniProtKB-UniRule"/>
</dbReference>
<dbReference type="CDD" id="cd01583">
    <property type="entry name" value="IPMI"/>
    <property type="match status" value="1"/>
</dbReference>
<dbReference type="FunFam" id="3.30.499.10:FF:000007">
    <property type="entry name" value="3-isopropylmalate dehydratase large subunit"/>
    <property type="match status" value="1"/>
</dbReference>
<dbReference type="Gene3D" id="3.30.499.10">
    <property type="entry name" value="Aconitase, domain 3"/>
    <property type="match status" value="2"/>
</dbReference>
<dbReference type="HAMAP" id="MF_01026">
    <property type="entry name" value="LeuC_type1"/>
    <property type="match status" value="1"/>
</dbReference>
<dbReference type="InterPro" id="IPR004430">
    <property type="entry name" value="3-IsopropMal_deHydase_lsu"/>
</dbReference>
<dbReference type="InterPro" id="IPR015931">
    <property type="entry name" value="Acnase/IPM_dHydase_lsu_aba_1/3"/>
</dbReference>
<dbReference type="InterPro" id="IPR001030">
    <property type="entry name" value="Acoase/IPM_deHydtase_lsu_aba"/>
</dbReference>
<dbReference type="InterPro" id="IPR018136">
    <property type="entry name" value="Aconitase_4Fe-4S_BS"/>
</dbReference>
<dbReference type="InterPro" id="IPR036008">
    <property type="entry name" value="Aconitase_4Fe-4S_dom"/>
</dbReference>
<dbReference type="InterPro" id="IPR050067">
    <property type="entry name" value="IPM_dehydratase_rel_enz"/>
</dbReference>
<dbReference type="InterPro" id="IPR033941">
    <property type="entry name" value="IPMI_cat"/>
</dbReference>
<dbReference type="NCBIfam" id="TIGR00170">
    <property type="entry name" value="leuC"/>
    <property type="match status" value="1"/>
</dbReference>
<dbReference type="NCBIfam" id="NF004016">
    <property type="entry name" value="PRK05478.1"/>
    <property type="match status" value="1"/>
</dbReference>
<dbReference type="NCBIfam" id="NF009116">
    <property type="entry name" value="PRK12466.1"/>
    <property type="match status" value="1"/>
</dbReference>
<dbReference type="PANTHER" id="PTHR43822:SF9">
    <property type="entry name" value="3-ISOPROPYLMALATE DEHYDRATASE"/>
    <property type="match status" value="1"/>
</dbReference>
<dbReference type="PANTHER" id="PTHR43822">
    <property type="entry name" value="HOMOACONITASE, MITOCHONDRIAL-RELATED"/>
    <property type="match status" value="1"/>
</dbReference>
<dbReference type="Pfam" id="PF00330">
    <property type="entry name" value="Aconitase"/>
    <property type="match status" value="1"/>
</dbReference>
<dbReference type="PRINTS" id="PR00415">
    <property type="entry name" value="ACONITASE"/>
</dbReference>
<dbReference type="SUPFAM" id="SSF53732">
    <property type="entry name" value="Aconitase iron-sulfur domain"/>
    <property type="match status" value="1"/>
</dbReference>
<dbReference type="PROSITE" id="PS00450">
    <property type="entry name" value="ACONITASE_1"/>
    <property type="match status" value="1"/>
</dbReference>
<dbReference type="PROSITE" id="PS01244">
    <property type="entry name" value="ACONITASE_2"/>
    <property type="match status" value="1"/>
</dbReference>
<reference key="1">
    <citation type="journal article" date="2010" name="PLoS ONE">
        <title>The complete multipartite genome sequence of Cupriavidus necator JMP134, a versatile pollutant degrader.</title>
        <authorList>
            <person name="Lykidis A."/>
            <person name="Perez-Pantoja D."/>
            <person name="Ledger T."/>
            <person name="Mavromatis K."/>
            <person name="Anderson I.J."/>
            <person name="Ivanova N.N."/>
            <person name="Hooper S.D."/>
            <person name="Lapidus A."/>
            <person name="Lucas S."/>
            <person name="Gonzalez B."/>
            <person name="Kyrpides N.C."/>
        </authorList>
    </citation>
    <scope>NUCLEOTIDE SEQUENCE [LARGE SCALE GENOMIC DNA]</scope>
    <source>
        <strain>JMP134 / LMG 1197</strain>
    </source>
</reference>
<sequence length="469" mass="50826">MAKTLYDKLWDDHTVHVEEDGTTLLYIDRHLLHEVTSPQAFEGLKIAERPVWRISANLAVSDHNVPTTDRSEGIADPVSKLQVDTLDANCDSFGITQFKMNDHRQGIVHVIGPEQGATLPGMTVVCGDSHTSTHGAFGALAHGIGTSEVEHVLATQTLLGKKAKNMLVKVEGKLPRGCTAKDIVLAIIGKIGTAGGTGYTIEFAGSAIRDLTMEGRMTVCNMAIEAGARAGLVAVDNVTLEYVKGRPYAPQGVEWDQAVAYWSTLHSDAGASFDQVIELRAEDIRPQVTWGTSPEMVVSIEDRVPDPEKEKDPTRRNAMERALEYMNLQPNVPMESINVDKVFIGSCTNSRIEDMRAAAWVVQKLGRKVASNVKLAMVVPGSGLVKEQAEREGLDKVFKAAGFEWREPGCSMCLAMNADRLEPGERCASTSNRNFEGRQGAGGRTHLVSPAMAAAAAIEGHFVDIRKLG</sequence>
<protein>
    <recommendedName>
        <fullName evidence="1">3-isopropylmalate dehydratase large subunit</fullName>
        <ecNumber evidence="1">4.2.1.33</ecNumber>
    </recommendedName>
    <alternativeName>
        <fullName evidence="1">Alpha-IPM isomerase</fullName>
        <shortName evidence="1">IPMI</shortName>
    </alternativeName>
    <alternativeName>
        <fullName evidence="1">Isopropylmalate isomerase</fullName>
    </alternativeName>
</protein>
<proteinExistence type="inferred from homology"/>
<keyword id="KW-0004">4Fe-4S</keyword>
<keyword id="KW-0028">Amino-acid biosynthesis</keyword>
<keyword id="KW-0100">Branched-chain amino acid biosynthesis</keyword>
<keyword id="KW-0408">Iron</keyword>
<keyword id="KW-0411">Iron-sulfur</keyword>
<keyword id="KW-0432">Leucine biosynthesis</keyword>
<keyword id="KW-0456">Lyase</keyword>
<keyword id="KW-0479">Metal-binding</keyword>
<evidence type="ECO:0000255" key="1">
    <source>
        <dbReference type="HAMAP-Rule" id="MF_01026"/>
    </source>
</evidence>
<comment type="function">
    <text evidence="1">Catalyzes the isomerization between 2-isopropylmalate and 3-isopropylmalate, via the formation of 2-isopropylmaleate.</text>
</comment>
<comment type="catalytic activity">
    <reaction evidence="1">
        <text>(2R,3S)-3-isopropylmalate = (2S)-2-isopropylmalate</text>
        <dbReference type="Rhea" id="RHEA:32287"/>
        <dbReference type="ChEBI" id="CHEBI:1178"/>
        <dbReference type="ChEBI" id="CHEBI:35121"/>
        <dbReference type="EC" id="4.2.1.33"/>
    </reaction>
</comment>
<comment type="cofactor">
    <cofactor evidence="1">
        <name>[4Fe-4S] cluster</name>
        <dbReference type="ChEBI" id="CHEBI:49883"/>
    </cofactor>
    <text evidence="1">Binds 1 [4Fe-4S] cluster per subunit.</text>
</comment>
<comment type="pathway">
    <text evidence="1">Amino-acid biosynthesis; L-leucine biosynthesis; L-leucine from 3-methyl-2-oxobutanoate: step 2/4.</text>
</comment>
<comment type="subunit">
    <text evidence="1">Heterodimer of LeuC and LeuD.</text>
</comment>
<comment type="similarity">
    <text evidence="1">Belongs to the aconitase/IPM isomerase family. LeuC type 1 subfamily.</text>
</comment>
<name>LEUC_CUPPJ</name>
<feature type="chain" id="PRO_0000076792" description="3-isopropylmalate dehydratase large subunit">
    <location>
        <begin position="1"/>
        <end position="469"/>
    </location>
</feature>
<feature type="binding site" evidence="1">
    <location>
        <position position="347"/>
    </location>
    <ligand>
        <name>[4Fe-4S] cluster</name>
        <dbReference type="ChEBI" id="CHEBI:49883"/>
    </ligand>
</feature>
<feature type="binding site" evidence="1">
    <location>
        <position position="410"/>
    </location>
    <ligand>
        <name>[4Fe-4S] cluster</name>
        <dbReference type="ChEBI" id="CHEBI:49883"/>
    </ligand>
</feature>
<feature type="binding site" evidence="1">
    <location>
        <position position="413"/>
    </location>
    <ligand>
        <name>[4Fe-4S] cluster</name>
        <dbReference type="ChEBI" id="CHEBI:49883"/>
    </ligand>
</feature>
<gene>
    <name evidence="1" type="primary">leuC</name>
    <name type="ordered locus">Reut_A2314</name>
</gene>
<organism>
    <name type="scientific">Cupriavidus pinatubonensis (strain JMP 134 / LMG 1197)</name>
    <name type="common">Cupriavidus necator (strain JMP 134)</name>
    <dbReference type="NCBI Taxonomy" id="264198"/>
    <lineage>
        <taxon>Bacteria</taxon>
        <taxon>Pseudomonadati</taxon>
        <taxon>Pseudomonadota</taxon>
        <taxon>Betaproteobacteria</taxon>
        <taxon>Burkholderiales</taxon>
        <taxon>Burkholderiaceae</taxon>
        <taxon>Cupriavidus</taxon>
    </lineage>
</organism>
<accession>Q46YV7</accession>